<keyword id="KW-0963">Cytoplasm</keyword>
<keyword id="KW-0217">Developmental protein</keyword>
<keyword id="KW-0221">Differentiation</keyword>
<keyword id="KW-0479">Metal-binding</keyword>
<keyword id="KW-1185">Reference proteome</keyword>
<keyword id="KW-0694">RNA-binding</keyword>
<keyword id="KW-0744">Spermatogenesis</keyword>
<keyword id="KW-0810">Translation regulation</keyword>
<keyword id="KW-0862">Zinc</keyword>
<keyword id="KW-0863">Zinc-finger</keyword>
<gene>
    <name type="primary">Nanos2</name>
    <name type="synonym">Nos2</name>
</gene>
<accession>P60322</accession>
<accession>F8VQ09</accession>
<dbReference type="EMBL" id="AB095972">
    <property type="protein sequence ID" value="BAC82557.1"/>
    <property type="molecule type" value="mRNA"/>
</dbReference>
<dbReference type="EMBL" id="AC170864">
    <property type="status" value="NOT_ANNOTATED_CDS"/>
    <property type="molecule type" value="Genomic_DNA"/>
</dbReference>
<dbReference type="CCDS" id="CCDS20883.1"/>
<dbReference type="RefSeq" id="NP_918953.2">
    <property type="nucleotide sequence ID" value="NM_194064.2"/>
</dbReference>
<dbReference type="SMR" id="P60322"/>
<dbReference type="BioGRID" id="237543">
    <property type="interactions" value="1"/>
</dbReference>
<dbReference type="CORUM" id="P60322"/>
<dbReference type="DIP" id="DIP-59508N"/>
<dbReference type="ELM" id="P60322"/>
<dbReference type="FunCoup" id="P60322">
    <property type="interactions" value="519"/>
</dbReference>
<dbReference type="IntAct" id="P60322">
    <property type="interactions" value="7"/>
</dbReference>
<dbReference type="STRING" id="10090.ENSMUSP00000069765"/>
<dbReference type="BindingDB" id="P60322"/>
<dbReference type="SwissPalm" id="P60322"/>
<dbReference type="jPOST" id="P60322"/>
<dbReference type="PaxDb" id="10090-ENSMUSP00000069765"/>
<dbReference type="Antibodypedia" id="31412">
    <property type="antibodies" value="248 antibodies from 30 providers"/>
</dbReference>
<dbReference type="DNASU" id="378430"/>
<dbReference type="Ensembl" id="ENSMUST00000063563.9">
    <property type="protein sequence ID" value="ENSMUSP00000069765.8"/>
    <property type="gene ID" value="ENSMUSG00000051965.9"/>
</dbReference>
<dbReference type="GeneID" id="378430"/>
<dbReference type="KEGG" id="mmu:378430"/>
<dbReference type="UCSC" id="uc009fjz.1">
    <property type="organism name" value="mouse"/>
</dbReference>
<dbReference type="AGR" id="MGI:2676627"/>
<dbReference type="CTD" id="339345"/>
<dbReference type="MGI" id="MGI:2676627">
    <property type="gene designation" value="Nanos2"/>
</dbReference>
<dbReference type="VEuPathDB" id="HostDB:ENSMUSG00000051965"/>
<dbReference type="eggNOG" id="KOG4602">
    <property type="taxonomic scope" value="Eukaryota"/>
</dbReference>
<dbReference type="GeneTree" id="ENSGT00950000183135"/>
<dbReference type="HOGENOM" id="CLU_094055_1_1_1"/>
<dbReference type="InParanoid" id="P60322"/>
<dbReference type="OMA" id="WRDYFNL"/>
<dbReference type="OrthoDB" id="5864971at2759"/>
<dbReference type="PhylomeDB" id="P60322"/>
<dbReference type="TreeFam" id="TF326882"/>
<dbReference type="BioGRID-ORCS" id="378430">
    <property type="hits" value="3 hits in 77 CRISPR screens"/>
</dbReference>
<dbReference type="CD-CODE" id="AD9D4934">
    <property type="entry name" value="P-body"/>
</dbReference>
<dbReference type="PRO" id="PR:P60322"/>
<dbReference type="Proteomes" id="UP000000589">
    <property type="component" value="Chromosome 7"/>
</dbReference>
<dbReference type="RNAct" id="P60322">
    <property type="molecule type" value="protein"/>
</dbReference>
<dbReference type="Bgee" id="ENSMUSG00000051965">
    <property type="expression patterns" value="Expressed in animal zygote and 31 other cell types or tissues"/>
</dbReference>
<dbReference type="ExpressionAtlas" id="P60322">
    <property type="expression patterns" value="baseline and differential"/>
</dbReference>
<dbReference type="GO" id="GO:0005737">
    <property type="term" value="C:cytoplasm"/>
    <property type="evidence" value="ECO:0000314"/>
    <property type="project" value="UniProtKB"/>
</dbReference>
<dbReference type="GO" id="GO:0005634">
    <property type="term" value="C:nucleus"/>
    <property type="evidence" value="ECO:0007669"/>
    <property type="project" value="Ensembl"/>
</dbReference>
<dbReference type="GO" id="GO:0000932">
    <property type="term" value="C:P-body"/>
    <property type="evidence" value="ECO:0000314"/>
    <property type="project" value="UniProtKB"/>
</dbReference>
<dbReference type="GO" id="GO:0048471">
    <property type="term" value="C:perinuclear region of cytoplasm"/>
    <property type="evidence" value="ECO:0000314"/>
    <property type="project" value="MGI"/>
</dbReference>
<dbReference type="GO" id="GO:0008047">
    <property type="term" value="F:enzyme activator activity"/>
    <property type="evidence" value="ECO:0007669"/>
    <property type="project" value="Ensembl"/>
</dbReference>
<dbReference type="GO" id="GO:0003729">
    <property type="term" value="F:mRNA binding"/>
    <property type="evidence" value="ECO:0000314"/>
    <property type="project" value="MGI"/>
</dbReference>
<dbReference type="GO" id="GO:0008270">
    <property type="term" value="F:zinc ion binding"/>
    <property type="evidence" value="ECO:0007669"/>
    <property type="project" value="UniProtKB-KW"/>
</dbReference>
<dbReference type="GO" id="GO:0030154">
    <property type="term" value="P:cell differentiation"/>
    <property type="evidence" value="ECO:0007669"/>
    <property type="project" value="UniProtKB-KW"/>
</dbReference>
<dbReference type="GO" id="GO:0030718">
    <property type="term" value="P:germ-line stem cell population maintenance"/>
    <property type="evidence" value="ECO:0000315"/>
    <property type="project" value="UniProtKB"/>
</dbReference>
<dbReference type="GO" id="GO:0006402">
    <property type="term" value="P:mRNA catabolic process"/>
    <property type="evidence" value="ECO:0000315"/>
    <property type="project" value="UniProtKB"/>
</dbReference>
<dbReference type="GO" id="GO:0061157">
    <property type="term" value="P:mRNA destabilization"/>
    <property type="evidence" value="ECO:0007669"/>
    <property type="project" value="Ensembl"/>
</dbReference>
<dbReference type="GO" id="GO:0045835">
    <property type="term" value="P:negative regulation of meiotic nuclear division"/>
    <property type="evidence" value="ECO:0000315"/>
    <property type="project" value="UniProtKB"/>
</dbReference>
<dbReference type="GO" id="GO:0017148">
    <property type="term" value="P:negative regulation of translation"/>
    <property type="evidence" value="ECO:0007669"/>
    <property type="project" value="Ensembl"/>
</dbReference>
<dbReference type="GO" id="GO:0007283">
    <property type="term" value="P:spermatogenesis"/>
    <property type="evidence" value="ECO:0000315"/>
    <property type="project" value="UniProtKB"/>
</dbReference>
<dbReference type="FunFam" id="4.10.60.30:FF:000001">
    <property type="entry name" value="nanos homolog 3"/>
    <property type="match status" value="1"/>
</dbReference>
<dbReference type="Gene3D" id="4.10.60.30">
    <property type="entry name" value="Nanos, RNA-binding domain"/>
    <property type="match status" value="1"/>
</dbReference>
<dbReference type="InterPro" id="IPR008705">
    <property type="entry name" value="Nanos/Xcar2"/>
</dbReference>
<dbReference type="InterPro" id="IPR038129">
    <property type="entry name" value="Nanos_sf"/>
</dbReference>
<dbReference type="InterPro" id="IPR024161">
    <property type="entry name" value="Znf_nanos-typ"/>
</dbReference>
<dbReference type="PANTHER" id="PTHR12887">
    <property type="entry name" value="NANOS PROTEIN"/>
    <property type="match status" value="1"/>
</dbReference>
<dbReference type="Pfam" id="PF05741">
    <property type="entry name" value="zf-nanos"/>
    <property type="match status" value="1"/>
</dbReference>
<dbReference type="PROSITE" id="PS51522">
    <property type="entry name" value="ZF_NANOS"/>
    <property type="match status" value="1"/>
</dbReference>
<feature type="chain" id="PRO_0000207688" description="Nanos homolog 2">
    <location>
        <begin position="1"/>
        <end position="136"/>
    </location>
</feature>
<feature type="zinc finger region" description="Nanos-type" evidence="2">
    <location>
        <begin position="60"/>
        <end position="114"/>
    </location>
</feature>
<feature type="region of interest" description="Disordered" evidence="3">
    <location>
        <begin position="27"/>
        <end position="51"/>
    </location>
</feature>
<feature type="short sequence motif" description="C2HC 1" evidence="2">
    <location>
        <begin position="61"/>
        <end position="88"/>
    </location>
</feature>
<feature type="short sequence motif" description="C2HC 2" evidence="2">
    <location>
        <begin position="96"/>
        <end position="112"/>
    </location>
</feature>
<feature type="compositionally biased region" description="Basic and acidic residues" evidence="3">
    <location>
        <begin position="28"/>
        <end position="48"/>
    </location>
</feature>
<feature type="binding site" evidence="2">
    <location>
        <position position="61"/>
    </location>
    <ligand>
        <name>Zn(2+)</name>
        <dbReference type="ChEBI" id="CHEBI:29105"/>
        <label>1</label>
    </ligand>
</feature>
<feature type="binding site" evidence="2">
    <location>
        <position position="64"/>
    </location>
    <ligand>
        <name>Zn(2+)</name>
        <dbReference type="ChEBI" id="CHEBI:29105"/>
        <label>1</label>
    </ligand>
</feature>
<feature type="binding site" evidence="2">
    <location>
        <position position="77"/>
    </location>
    <ligand>
        <name>Zn(2+)</name>
        <dbReference type="ChEBI" id="CHEBI:29105"/>
        <label>1</label>
    </ligand>
</feature>
<feature type="binding site" evidence="2">
    <location>
        <position position="88"/>
    </location>
    <ligand>
        <name>Zn(2+)</name>
        <dbReference type="ChEBI" id="CHEBI:29105"/>
        <label>1</label>
    </ligand>
</feature>
<feature type="binding site" evidence="2">
    <location>
        <position position="96"/>
    </location>
    <ligand>
        <name>Zn(2+)</name>
        <dbReference type="ChEBI" id="CHEBI:29105"/>
        <label>2</label>
    </ligand>
</feature>
<feature type="binding site" evidence="2">
    <location>
        <position position="99"/>
    </location>
    <ligand>
        <name>Zn(2+)</name>
        <dbReference type="ChEBI" id="CHEBI:29105"/>
        <label>2</label>
    </ligand>
</feature>
<feature type="binding site" evidence="2">
    <location>
        <position position="107"/>
    </location>
    <ligand>
        <name>Zn(2+)</name>
        <dbReference type="ChEBI" id="CHEBI:29105"/>
        <label>2</label>
    </ligand>
</feature>
<feature type="binding site" evidence="2">
    <location>
        <position position="112"/>
    </location>
    <ligand>
        <name>Zn(2+)</name>
        <dbReference type="ChEBI" id="CHEBI:29105"/>
        <label>2</label>
    </ligand>
</feature>
<feature type="sequence conflict" description="In Ref. 1; BAC82557." evidence="9" ref="1">
    <original>S</original>
    <variation>T</variation>
    <location>
        <position position="46"/>
    </location>
</feature>
<evidence type="ECO:0000250" key="1"/>
<evidence type="ECO:0000255" key="2">
    <source>
        <dbReference type="PROSITE-ProRule" id="PRU00855"/>
    </source>
</evidence>
<evidence type="ECO:0000256" key="3">
    <source>
        <dbReference type="SAM" id="MobiDB-lite"/>
    </source>
</evidence>
<evidence type="ECO:0000269" key="4">
    <source>
    </source>
</evidence>
<evidence type="ECO:0000269" key="5">
    <source>
    </source>
</evidence>
<evidence type="ECO:0000269" key="6">
    <source>
    </source>
</evidence>
<evidence type="ECO:0000269" key="7">
    <source>
    </source>
</evidence>
<evidence type="ECO:0000269" key="8">
    <source>
    </source>
</evidence>
<evidence type="ECO:0000305" key="9"/>
<comment type="function">
    <text evidence="4 5 6 7 8">Plays a key role in the sexual differentiation of germ cells by promoting the male fate but suppressing the female fate. Represses the female fate pathways by suppressing meiosis, which in turn results in the promotion of the male fate. Maintains the suppression of meiosis by preventing STRA8 expression, which is required for premeiotic DNA replication, after CYP26B1 is decreased. Regulates the localization of the CCR4-NOT deadenylation complex to P-bodies and plays a role in recruiting the complex to trigger the degradation of mRNAs involved in meiosis. Required for the maintenance of the spermatogonial stem cell population. Not essential for the assembly of P-bodies but is required for the maintenance of their normal state.</text>
</comment>
<comment type="subunit">
    <text evidence="8">Interacts with CNOT1, CNOT3, CNOT6L, CNOT7 and CNOT9.</text>
</comment>
<comment type="interaction">
    <interactant intactId="EBI-6507212">
        <id>P60322</id>
    </interactant>
    <interactant intactId="EBI-682479">
        <id>Q6ZQ08</id>
        <label>Cnot1</label>
    </interactant>
    <organismsDiffer>false</organismsDiffer>
    <experiments>3</experiments>
</comment>
<comment type="subcellular location">
    <subcellularLocation>
        <location evidence="8">Cytoplasm</location>
    </subcellularLocation>
    <subcellularLocation>
        <location evidence="8">Cytoplasm</location>
        <location evidence="8">P-body</location>
    </subcellularLocation>
    <subcellularLocation>
        <location evidence="1">Cytoplasm</location>
        <location evidence="1">Perinuclear region</location>
    </subcellularLocation>
    <text evidence="1">More abundant in perinuclear region of the cytoplasm of the germ cells of the adult testis (By similarity). Localizes at P-bodies during gonocyte development.</text>
</comment>
<comment type="tissue specificity">
    <text evidence="4 7">Predominantly expressed in male germ cells. Expressed in self-renewing spermatogonial stem cells and developing gonads.</text>
</comment>
<comment type="developmental stage">
    <text evidence="5 8">First detectable at 13.5 dpc in the male gonocytes, levels increase until about 16.5 dpc and then slightly decrease by 17.5 dpc (at protein level). Expression is maintained in all male gonocytes during embryogenesis, but becomes confined to a small population of the spermatogonia after birth.</text>
</comment>
<comment type="domain">
    <text evidence="2">The Nanos-type zinc finger is composed of two C2HC motifs, each motif binding one molecule of zinc. It is essential for the translation repression activity of the protein.</text>
</comment>
<comment type="disruption phenotype">
    <text evidence="7">Mice show a gradual loss of the germ cell population within a few cycles of spermatogenesis which is caused by the depletion of spermatogonial stem cells that produce differentiating spermatogenic cells.</text>
</comment>
<comment type="similarity">
    <text evidence="2">Belongs to the nanos family.</text>
</comment>
<reference key="1">
    <citation type="journal article" date="2003" name="Science">
        <title>Conserved role of nanos proteins in germ cell development.</title>
        <authorList>
            <person name="Tsuda M."/>
            <person name="Sasaoka Y."/>
            <person name="Kiso M."/>
            <person name="Abe K."/>
            <person name="Haraguchi S."/>
            <person name="Kobayashi S."/>
            <person name="Saga Y."/>
        </authorList>
    </citation>
    <scope>NUCLEOTIDE SEQUENCE [MRNA]</scope>
    <scope>FUNCTION</scope>
    <scope>TISSUE SPECIFICITY</scope>
    <source>
        <tissue>Fetal gonad</tissue>
    </source>
</reference>
<reference key="2">
    <citation type="journal article" date="2009" name="PLoS Biol.">
        <title>Lineage-specific biology revealed by a finished genome assembly of the mouse.</title>
        <authorList>
            <person name="Church D.M."/>
            <person name="Goodstadt L."/>
            <person name="Hillier L.W."/>
            <person name="Zody M.C."/>
            <person name="Goldstein S."/>
            <person name="She X."/>
            <person name="Bult C.J."/>
            <person name="Agarwala R."/>
            <person name="Cherry J.L."/>
            <person name="DiCuccio M."/>
            <person name="Hlavina W."/>
            <person name="Kapustin Y."/>
            <person name="Meric P."/>
            <person name="Maglott D."/>
            <person name="Birtle Z."/>
            <person name="Marques A.C."/>
            <person name="Graves T."/>
            <person name="Zhou S."/>
            <person name="Teague B."/>
            <person name="Potamousis K."/>
            <person name="Churas C."/>
            <person name="Place M."/>
            <person name="Herschleb J."/>
            <person name="Runnheim R."/>
            <person name="Forrest D."/>
            <person name="Amos-Landgraf J."/>
            <person name="Schwartz D.C."/>
            <person name="Cheng Z."/>
            <person name="Lindblad-Toh K."/>
            <person name="Eichler E.E."/>
            <person name="Ponting C.P."/>
        </authorList>
    </citation>
    <scope>NUCLEOTIDE SEQUENCE [LARGE SCALE GENOMIC DNA]</scope>
    <source>
        <strain>C57BL/6J</strain>
    </source>
</reference>
<reference key="3">
    <citation type="journal article" date="2007" name="Development">
        <title>Functional redundancy among Nanos proteins and a distinct role of Nanos2 during male germ cell development.</title>
        <authorList>
            <person name="Suzuki A."/>
            <person name="Tsuda M."/>
            <person name="Saga Y."/>
        </authorList>
    </citation>
    <scope>FUNCTION</scope>
    <scope>DEVELOPMENTAL STAGE</scope>
</reference>
<reference key="4">
    <citation type="journal article" date="2008" name="Genes Dev.">
        <title>Nanos2 suppresses meiosis and promotes male germ cell differentiation.</title>
        <authorList>
            <person name="Suzuki A."/>
            <person name="Saga Y."/>
        </authorList>
    </citation>
    <scope>FUNCTION</scope>
</reference>
<reference key="5">
    <citation type="journal article" date="2009" name="Science">
        <title>The RNA-binding protein NANOS2 is required to maintain murine spermatogonial stem cells.</title>
        <authorList>
            <person name="Sada A."/>
            <person name="Suzuki A."/>
            <person name="Suzuki H."/>
            <person name="Saga Y."/>
        </authorList>
    </citation>
    <scope>FUNCTION</scope>
    <scope>DISRUPTION PHENOTYPE</scope>
    <scope>TISSUE SPECIFICITY</scope>
</reference>
<reference key="6">
    <citation type="journal article" date="2010" name="Proc. Natl. Acad. Sci. U.S.A.">
        <title>NANOS2 interacts with the CCR4-NOT deadenylation complex and leads to suppression of specific RNAs.</title>
        <authorList>
            <person name="Suzuki A."/>
            <person name="Igarashi K."/>
            <person name="Aisaki K."/>
            <person name="Kanno J."/>
            <person name="Saga Y."/>
        </authorList>
    </citation>
    <scope>FUNCTION</scope>
    <scope>SUBCELLULAR LOCATION</scope>
    <scope>INTERACTION WITH CNOT1; CNOT3; CNOT6L; CNOT7 AND CNOT9</scope>
    <scope>DEVELOPMENTAL STAGE</scope>
</reference>
<name>NANO2_MOUSE</name>
<organism>
    <name type="scientific">Mus musculus</name>
    <name type="common">Mouse</name>
    <dbReference type="NCBI Taxonomy" id="10090"/>
    <lineage>
        <taxon>Eukaryota</taxon>
        <taxon>Metazoa</taxon>
        <taxon>Chordata</taxon>
        <taxon>Craniata</taxon>
        <taxon>Vertebrata</taxon>
        <taxon>Euteleostomi</taxon>
        <taxon>Mammalia</taxon>
        <taxon>Eutheria</taxon>
        <taxon>Euarchontoglires</taxon>
        <taxon>Glires</taxon>
        <taxon>Rodentia</taxon>
        <taxon>Myomorpha</taxon>
        <taxon>Muroidea</taxon>
        <taxon>Muridae</taxon>
        <taxon>Murinae</taxon>
        <taxon>Mus</taxon>
        <taxon>Mus</taxon>
    </lineage>
</organism>
<sequence>MDLPPFDMWRDYFNLSQVVMDIIQSRKQRQEGEVAEEPNSRPQEKSEQDLEGYPGCLPTICNFCKHNGESRHVYTSHQLKTPEGVVVCPILRHYVCPLCGATGDQAHTLKYCPLNSSQQSLYRRSGRNSAGRRVKR</sequence>
<proteinExistence type="evidence at protein level"/>
<protein>
    <recommendedName>
        <fullName>Nanos homolog 2</fullName>
        <shortName>NOS-2</shortName>
    </recommendedName>
</protein>